<feature type="chain" id="PRO_0000392413" description="Anamorsin homolog">
    <location>
        <begin position="1"/>
        <end position="278"/>
    </location>
</feature>
<feature type="region of interest" description="N-terminal SAM-like domain" evidence="1">
    <location>
        <begin position="1"/>
        <end position="147"/>
    </location>
</feature>
<feature type="region of interest" description="Linker" evidence="1">
    <location>
        <begin position="147"/>
        <end position="191"/>
    </location>
</feature>
<feature type="region of interest" description="Fe-S binding site A" evidence="1">
    <location>
        <begin position="204"/>
        <end position="219"/>
    </location>
</feature>
<feature type="region of interest" description="Fe-S binding site B" evidence="1">
    <location>
        <begin position="239"/>
        <end position="253"/>
    </location>
</feature>
<feature type="short sequence motif" description="Cx2C motif 1" evidence="1">
    <location>
        <begin position="239"/>
        <end position="242"/>
    </location>
</feature>
<feature type="short sequence motif" description="Cx2C motif 2" evidence="1">
    <location>
        <begin position="250"/>
        <end position="253"/>
    </location>
</feature>
<feature type="binding site" evidence="1">
    <location>
        <position position="204"/>
    </location>
    <ligand>
        <name>[2Fe-2S] cluster</name>
        <dbReference type="ChEBI" id="CHEBI:190135"/>
    </ligand>
</feature>
<feature type="binding site" evidence="1">
    <location>
        <position position="214"/>
    </location>
    <ligand>
        <name>[2Fe-2S] cluster</name>
        <dbReference type="ChEBI" id="CHEBI:190135"/>
    </ligand>
</feature>
<feature type="binding site" evidence="1">
    <location>
        <position position="217"/>
    </location>
    <ligand>
        <name>[2Fe-2S] cluster</name>
        <dbReference type="ChEBI" id="CHEBI:190135"/>
    </ligand>
</feature>
<feature type="binding site" evidence="1">
    <location>
        <position position="219"/>
    </location>
    <ligand>
        <name>[2Fe-2S] cluster</name>
        <dbReference type="ChEBI" id="CHEBI:190135"/>
    </ligand>
</feature>
<feature type="binding site" evidence="1">
    <location>
        <position position="239"/>
    </location>
    <ligand>
        <name>[4Fe-4S] cluster</name>
        <dbReference type="ChEBI" id="CHEBI:49883"/>
    </ligand>
</feature>
<feature type="binding site" evidence="1">
    <location>
        <position position="242"/>
    </location>
    <ligand>
        <name>[4Fe-4S] cluster</name>
        <dbReference type="ChEBI" id="CHEBI:49883"/>
    </ligand>
</feature>
<feature type="binding site" evidence="1">
    <location>
        <position position="250"/>
    </location>
    <ligand>
        <name>[4Fe-4S] cluster</name>
        <dbReference type="ChEBI" id="CHEBI:49883"/>
    </ligand>
</feature>
<feature type="binding site" evidence="1">
    <location>
        <position position="253"/>
    </location>
    <ligand>
        <name>[4Fe-4S] cluster</name>
        <dbReference type="ChEBI" id="CHEBI:49883"/>
    </ligand>
</feature>
<organism>
    <name type="scientific">Trichoplax adhaerens</name>
    <name type="common">Trichoplax reptans</name>
    <dbReference type="NCBI Taxonomy" id="10228"/>
    <lineage>
        <taxon>Eukaryota</taxon>
        <taxon>Metazoa</taxon>
        <taxon>Placozoa</taxon>
        <taxon>Uniplacotomia</taxon>
        <taxon>Trichoplacea</taxon>
        <taxon>Trichoplacidae</taxon>
        <taxon>Trichoplax</taxon>
    </lineage>
</organism>
<keyword id="KW-0001">2Fe-2S</keyword>
<keyword id="KW-0004">4Fe-4S</keyword>
<keyword id="KW-0963">Cytoplasm</keyword>
<keyword id="KW-0408">Iron</keyword>
<keyword id="KW-0411">Iron-sulfur</keyword>
<keyword id="KW-0479">Metal-binding</keyword>
<keyword id="KW-0496">Mitochondrion</keyword>
<keyword id="KW-1185">Reference proteome</keyword>
<proteinExistence type="inferred from homology"/>
<sequence length="278" mass="30073">MESVSHLVSNGQSVLLVWSQGGQLDTLANFTSSLRERVGTNGTVAVENINRLSQSSYGSSTFDVALSNVVSSYCCKHTSEQLAQILKMLKPDCKCLLRDTSPSDQIRSELILAGFTNISIVAEDNATVKVNARKPNFEIGSSAALPFANKISLGGNSKMETAKMWTLSSQDFVDDDIDIIDENTLIEEDDFLKPDPSSLRSQECDSAKKKRKACKNCSCGLAEEIESEKKTNGNPVSSCGSCYLGDAFRCSSCPYLGMPAFKPGEKVALPSRLLQADV</sequence>
<reference key="1">
    <citation type="journal article" date="2008" name="Nature">
        <title>The Trichoplax genome and the nature of placozoans.</title>
        <authorList>
            <person name="Srivastava M."/>
            <person name="Begovic E."/>
            <person name="Chapman J."/>
            <person name="Putnam N.H."/>
            <person name="Hellsten U."/>
            <person name="Kawashima T."/>
            <person name="Kuo A."/>
            <person name="Mitros T."/>
            <person name="Salamov A."/>
            <person name="Carpenter M.L."/>
            <person name="Signorovitch A.Y."/>
            <person name="Moreno M.A."/>
            <person name="Kamm K."/>
            <person name="Grimwood J."/>
            <person name="Schmutz J."/>
            <person name="Shapiro H."/>
            <person name="Grigoriev I.V."/>
            <person name="Buss L.W."/>
            <person name="Schierwater B."/>
            <person name="Dellaporta S.L."/>
            <person name="Rokhsar D.S."/>
        </authorList>
    </citation>
    <scope>NUCLEOTIDE SEQUENCE [LARGE SCALE GENOMIC DNA]</scope>
    <source>
        <strain>Grell-BS-1999</strain>
    </source>
</reference>
<accession>B3RVZ1</accession>
<gene>
    <name type="ORF">TRIADDRAFT_55827</name>
</gene>
<comment type="function">
    <text evidence="1">Component of the cytosolic iron-sulfur (Fe-S) protein assembly (CIA) machinery. Required for the maturation of extramitochondrial Fe-S proteins. Part of an electron transfer chain functioning in an early step of cytosolic Fe-S biogenesis, facilitating the de novo assembly of a [4Fe-4S] cluster on the cytosolic Fe-S scaffold complex. Electrons are transferred from NADPH via a FAD- and FMN-containing diflavin oxidoreductase. Together with the diflavin oxidoreductase, also required for the assembly of the diferric tyrosyl radical cofactor of ribonucleotide reductase (RNR), probably by providing electrons for reduction during radical cofactor maturation in the catalytic small subunit.</text>
</comment>
<comment type="cofactor">
    <cofactor evidence="1">
        <name>[2Fe-2S] cluster</name>
        <dbReference type="ChEBI" id="CHEBI:190135"/>
    </cofactor>
</comment>
<comment type="cofactor">
    <cofactor evidence="1">
        <name>[4Fe-4S] cluster</name>
        <dbReference type="ChEBI" id="CHEBI:49883"/>
    </cofactor>
</comment>
<comment type="subunit">
    <text evidence="1">Monomer.</text>
</comment>
<comment type="subcellular location">
    <subcellularLocation>
        <location evidence="1">Cytoplasm</location>
    </subcellularLocation>
    <subcellularLocation>
        <location evidence="1">Mitochondrion intermembrane space</location>
    </subcellularLocation>
</comment>
<comment type="domain">
    <text evidence="1">The C-terminal domain binds 2 Fe-S clusters but is otherwise mostly in an intrinsically disordered conformation.</text>
</comment>
<comment type="domain">
    <text evidence="1">The N-terminal domain has structural similarity with S-adenosyl-L-methionine-dependent methyltransferases, but does not bind S-adenosyl-L-methionine. It is required for correct assembly of the 2 Fe-S clusters.</text>
</comment>
<comment type="domain">
    <text evidence="1">The twin Cx2C motifs are involved in the recognition by the mitochondrial MIA40-ERV1 disulfide relay system. The formation of 2 disulfide bonds in the Cx2C motifs through dithiol/disulfide exchange reactions effectively traps the protein in the mitochondrial intermembrane space.</text>
</comment>
<comment type="similarity">
    <text evidence="1">Belongs to the anamorsin family.</text>
</comment>
<name>DRE2_TRIAD</name>
<protein>
    <recommendedName>
        <fullName evidence="1">Anamorsin homolog</fullName>
    </recommendedName>
    <alternativeName>
        <fullName evidence="1">Fe-S cluster assembly protein DRE2 homolog</fullName>
    </alternativeName>
</protein>
<dbReference type="EMBL" id="DS985244">
    <property type="protein sequence ID" value="EDV26082.1"/>
    <property type="molecule type" value="Genomic_DNA"/>
</dbReference>
<dbReference type="RefSeq" id="XP_002112115.1">
    <property type="nucleotide sequence ID" value="XM_002112079.1"/>
</dbReference>
<dbReference type="SMR" id="B3RVZ1"/>
<dbReference type="FunCoup" id="B3RVZ1">
    <property type="interactions" value="2298"/>
</dbReference>
<dbReference type="STRING" id="10228.B3RVZ1"/>
<dbReference type="EnsemblMetazoa" id="TriadT55827">
    <property type="protein sequence ID" value="TriadP55827"/>
    <property type="gene ID" value="TriadG55827"/>
</dbReference>
<dbReference type="GeneID" id="6753328"/>
<dbReference type="KEGG" id="tad:TRIADDRAFT_55827"/>
<dbReference type="CTD" id="6753328"/>
<dbReference type="eggNOG" id="KOG4020">
    <property type="taxonomic scope" value="Eukaryota"/>
</dbReference>
<dbReference type="HOGENOM" id="CLU_064393_1_0_1"/>
<dbReference type="InParanoid" id="B3RVZ1"/>
<dbReference type="OMA" id="GFINCRE"/>
<dbReference type="OrthoDB" id="311633at2759"/>
<dbReference type="PhylomeDB" id="B3RVZ1"/>
<dbReference type="Proteomes" id="UP000009022">
    <property type="component" value="Unassembled WGS sequence"/>
</dbReference>
<dbReference type="GO" id="GO:0005737">
    <property type="term" value="C:cytoplasm"/>
    <property type="evidence" value="ECO:0000318"/>
    <property type="project" value="GO_Central"/>
</dbReference>
<dbReference type="GO" id="GO:0005758">
    <property type="term" value="C:mitochondrial intermembrane space"/>
    <property type="evidence" value="ECO:0007669"/>
    <property type="project" value="UniProtKB-SubCell"/>
</dbReference>
<dbReference type="GO" id="GO:0051537">
    <property type="term" value="F:2 iron, 2 sulfur cluster binding"/>
    <property type="evidence" value="ECO:0007669"/>
    <property type="project" value="UniProtKB-UniRule"/>
</dbReference>
<dbReference type="GO" id="GO:0051539">
    <property type="term" value="F:4 iron, 4 sulfur cluster binding"/>
    <property type="evidence" value="ECO:0007669"/>
    <property type="project" value="UniProtKB-KW"/>
</dbReference>
<dbReference type="GO" id="GO:0009055">
    <property type="term" value="F:electron transfer activity"/>
    <property type="evidence" value="ECO:0007669"/>
    <property type="project" value="UniProtKB-UniRule"/>
</dbReference>
<dbReference type="GO" id="GO:0046872">
    <property type="term" value="F:metal ion binding"/>
    <property type="evidence" value="ECO:0007669"/>
    <property type="project" value="UniProtKB-KW"/>
</dbReference>
<dbReference type="GO" id="GO:0016226">
    <property type="term" value="P:iron-sulfur cluster assembly"/>
    <property type="evidence" value="ECO:0000318"/>
    <property type="project" value="GO_Central"/>
</dbReference>
<dbReference type="Gene3D" id="3.40.50.150">
    <property type="entry name" value="Vaccinia Virus protein VP39"/>
    <property type="match status" value="1"/>
</dbReference>
<dbReference type="HAMAP" id="MF_03115">
    <property type="entry name" value="Anamorsin"/>
    <property type="match status" value="1"/>
</dbReference>
<dbReference type="InterPro" id="IPR007785">
    <property type="entry name" value="Anamorsin"/>
</dbReference>
<dbReference type="InterPro" id="IPR049011">
    <property type="entry name" value="Anamorsin_N_metazoan"/>
</dbReference>
<dbReference type="InterPro" id="IPR046408">
    <property type="entry name" value="CIAPIN1"/>
</dbReference>
<dbReference type="InterPro" id="IPR029063">
    <property type="entry name" value="SAM-dependent_MTases_sf"/>
</dbReference>
<dbReference type="PANTHER" id="PTHR13273">
    <property type="entry name" value="ANAMORSIN"/>
    <property type="match status" value="1"/>
</dbReference>
<dbReference type="PANTHER" id="PTHR13273:SF14">
    <property type="entry name" value="ANAMORSIN"/>
    <property type="match status" value="1"/>
</dbReference>
<dbReference type="Pfam" id="PF20922">
    <property type="entry name" value="Anamorsin_N"/>
    <property type="match status" value="1"/>
</dbReference>
<dbReference type="Pfam" id="PF05093">
    <property type="entry name" value="CIAPIN1"/>
    <property type="match status" value="2"/>
</dbReference>
<evidence type="ECO:0000255" key="1">
    <source>
        <dbReference type="HAMAP-Rule" id="MF_03115"/>
    </source>
</evidence>